<name>DAPE_BRASB</name>
<reference key="1">
    <citation type="journal article" date="2007" name="Science">
        <title>Legumes symbioses: absence of nod genes in photosynthetic bradyrhizobia.</title>
        <authorList>
            <person name="Giraud E."/>
            <person name="Moulin L."/>
            <person name="Vallenet D."/>
            <person name="Barbe V."/>
            <person name="Cytryn E."/>
            <person name="Avarre J.-C."/>
            <person name="Jaubert M."/>
            <person name="Simon D."/>
            <person name="Cartieaux F."/>
            <person name="Prin Y."/>
            <person name="Bena G."/>
            <person name="Hannibal L."/>
            <person name="Fardoux J."/>
            <person name="Kojadinovic M."/>
            <person name="Vuillet L."/>
            <person name="Lajus A."/>
            <person name="Cruveiller S."/>
            <person name="Rouy Z."/>
            <person name="Mangenot S."/>
            <person name="Segurens B."/>
            <person name="Dossat C."/>
            <person name="Franck W.L."/>
            <person name="Chang W.-S."/>
            <person name="Saunders E."/>
            <person name="Bruce D."/>
            <person name="Richardson P."/>
            <person name="Normand P."/>
            <person name="Dreyfus B."/>
            <person name="Pignol D."/>
            <person name="Stacey G."/>
            <person name="Emerich D."/>
            <person name="Vermeglio A."/>
            <person name="Medigue C."/>
            <person name="Sadowsky M."/>
        </authorList>
    </citation>
    <scope>NUCLEOTIDE SEQUENCE [LARGE SCALE GENOMIC DNA]</scope>
    <source>
        <strain>BTAi1 / ATCC BAA-1182</strain>
    </source>
</reference>
<proteinExistence type="inferred from homology"/>
<keyword id="KW-0028">Amino-acid biosynthesis</keyword>
<keyword id="KW-0170">Cobalt</keyword>
<keyword id="KW-0220">Diaminopimelate biosynthesis</keyword>
<keyword id="KW-0378">Hydrolase</keyword>
<keyword id="KW-0457">Lysine biosynthesis</keyword>
<keyword id="KW-0479">Metal-binding</keyword>
<keyword id="KW-1185">Reference proteome</keyword>
<keyword id="KW-0862">Zinc</keyword>
<dbReference type="EC" id="3.5.1.18" evidence="1"/>
<dbReference type="EMBL" id="CP000494">
    <property type="protein sequence ID" value="ABQ39197.1"/>
    <property type="molecule type" value="Genomic_DNA"/>
</dbReference>
<dbReference type="RefSeq" id="WP_012047100.1">
    <property type="nucleotide sequence ID" value="NC_009485.1"/>
</dbReference>
<dbReference type="SMR" id="A5ESQ3"/>
<dbReference type="STRING" id="288000.BBta_7333"/>
<dbReference type="KEGG" id="bbt:BBta_7333"/>
<dbReference type="eggNOG" id="COG0624">
    <property type="taxonomic scope" value="Bacteria"/>
</dbReference>
<dbReference type="HOGENOM" id="CLU_021802_4_0_5"/>
<dbReference type="OrthoDB" id="9809784at2"/>
<dbReference type="UniPathway" id="UPA00034">
    <property type="reaction ID" value="UER00021"/>
</dbReference>
<dbReference type="Proteomes" id="UP000000246">
    <property type="component" value="Chromosome"/>
</dbReference>
<dbReference type="GO" id="GO:0008777">
    <property type="term" value="F:acetylornithine deacetylase activity"/>
    <property type="evidence" value="ECO:0007669"/>
    <property type="project" value="TreeGrafter"/>
</dbReference>
<dbReference type="GO" id="GO:0050897">
    <property type="term" value="F:cobalt ion binding"/>
    <property type="evidence" value="ECO:0007669"/>
    <property type="project" value="UniProtKB-UniRule"/>
</dbReference>
<dbReference type="GO" id="GO:0009014">
    <property type="term" value="F:succinyl-diaminopimelate desuccinylase activity"/>
    <property type="evidence" value="ECO:0007669"/>
    <property type="project" value="UniProtKB-UniRule"/>
</dbReference>
<dbReference type="GO" id="GO:0008270">
    <property type="term" value="F:zinc ion binding"/>
    <property type="evidence" value="ECO:0007669"/>
    <property type="project" value="UniProtKB-UniRule"/>
</dbReference>
<dbReference type="GO" id="GO:0019877">
    <property type="term" value="P:diaminopimelate biosynthetic process"/>
    <property type="evidence" value="ECO:0007669"/>
    <property type="project" value="UniProtKB-UniRule"/>
</dbReference>
<dbReference type="GO" id="GO:0006526">
    <property type="term" value="P:L-arginine biosynthetic process"/>
    <property type="evidence" value="ECO:0007669"/>
    <property type="project" value="TreeGrafter"/>
</dbReference>
<dbReference type="GO" id="GO:0009089">
    <property type="term" value="P:lysine biosynthetic process via diaminopimelate"/>
    <property type="evidence" value="ECO:0007669"/>
    <property type="project" value="UniProtKB-UniRule"/>
</dbReference>
<dbReference type="CDD" id="cd03891">
    <property type="entry name" value="M20_DapE_proteobac"/>
    <property type="match status" value="1"/>
</dbReference>
<dbReference type="Gene3D" id="3.40.630.10">
    <property type="entry name" value="Zn peptidases"/>
    <property type="match status" value="2"/>
</dbReference>
<dbReference type="HAMAP" id="MF_01690">
    <property type="entry name" value="DapE"/>
    <property type="match status" value="1"/>
</dbReference>
<dbReference type="InterPro" id="IPR036264">
    <property type="entry name" value="Bact_exopeptidase_dim_dom"/>
</dbReference>
<dbReference type="InterPro" id="IPR005941">
    <property type="entry name" value="DapE_proteobac"/>
</dbReference>
<dbReference type="InterPro" id="IPR002933">
    <property type="entry name" value="Peptidase_M20"/>
</dbReference>
<dbReference type="InterPro" id="IPR011650">
    <property type="entry name" value="Peptidase_M20_dimer"/>
</dbReference>
<dbReference type="InterPro" id="IPR050072">
    <property type="entry name" value="Peptidase_M20A"/>
</dbReference>
<dbReference type="NCBIfam" id="TIGR01246">
    <property type="entry name" value="dapE_proteo"/>
    <property type="match status" value="1"/>
</dbReference>
<dbReference type="NCBIfam" id="NF009557">
    <property type="entry name" value="PRK13009.1"/>
    <property type="match status" value="1"/>
</dbReference>
<dbReference type="PANTHER" id="PTHR43808">
    <property type="entry name" value="ACETYLORNITHINE DEACETYLASE"/>
    <property type="match status" value="1"/>
</dbReference>
<dbReference type="PANTHER" id="PTHR43808:SF31">
    <property type="entry name" value="N-ACETYL-L-CITRULLINE DEACETYLASE"/>
    <property type="match status" value="1"/>
</dbReference>
<dbReference type="Pfam" id="PF07687">
    <property type="entry name" value="M20_dimer"/>
    <property type="match status" value="1"/>
</dbReference>
<dbReference type="Pfam" id="PF01546">
    <property type="entry name" value="Peptidase_M20"/>
    <property type="match status" value="1"/>
</dbReference>
<dbReference type="SUPFAM" id="SSF55031">
    <property type="entry name" value="Bacterial exopeptidase dimerisation domain"/>
    <property type="match status" value="1"/>
</dbReference>
<dbReference type="SUPFAM" id="SSF53187">
    <property type="entry name" value="Zn-dependent exopeptidases"/>
    <property type="match status" value="1"/>
</dbReference>
<protein>
    <recommendedName>
        <fullName evidence="1">Succinyl-diaminopimelate desuccinylase</fullName>
        <shortName evidence="1">SDAP desuccinylase</shortName>
        <ecNumber evidence="1">3.5.1.18</ecNumber>
    </recommendedName>
    <alternativeName>
        <fullName evidence="1">N-succinyl-LL-2,6-diaminoheptanedioate amidohydrolase</fullName>
    </alternativeName>
</protein>
<evidence type="ECO:0000255" key="1">
    <source>
        <dbReference type="HAMAP-Rule" id="MF_01690"/>
    </source>
</evidence>
<comment type="function">
    <text evidence="1">Catalyzes the hydrolysis of N-succinyl-L,L-diaminopimelic acid (SDAP), forming succinate and LL-2,6-diaminopimelate (DAP), an intermediate involved in the bacterial biosynthesis of lysine and meso-diaminopimelic acid, an essential component of bacterial cell walls.</text>
</comment>
<comment type="catalytic activity">
    <reaction evidence="1">
        <text>N-succinyl-(2S,6S)-2,6-diaminopimelate + H2O = (2S,6S)-2,6-diaminopimelate + succinate</text>
        <dbReference type="Rhea" id="RHEA:22608"/>
        <dbReference type="ChEBI" id="CHEBI:15377"/>
        <dbReference type="ChEBI" id="CHEBI:30031"/>
        <dbReference type="ChEBI" id="CHEBI:57609"/>
        <dbReference type="ChEBI" id="CHEBI:58087"/>
        <dbReference type="EC" id="3.5.1.18"/>
    </reaction>
</comment>
<comment type="cofactor">
    <cofactor evidence="1">
        <name>Zn(2+)</name>
        <dbReference type="ChEBI" id="CHEBI:29105"/>
    </cofactor>
    <cofactor evidence="1">
        <name>Co(2+)</name>
        <dbReference type="ChEBI" id="CHEBI:48828"/>
    </cofactor>
    <text evidence="1">Binds 2 Zn(2+) or Co(2+) ions per subunit.</text>
</comment>
<comment type="pathway">
    <text evidence="1">Amino-acid biosynthesis; L-lysine biosynthesis via DAP pathway; LL-2,6-diaminopimelate from (S)-tetrahydrodipicolinate (succinylase route): step 3/3.</text>
</comment>
<comment type="subunit">
    <text evidence="1">Homodimer.</text>
</comment>
<comment type="similarity">
    <text evidence="1">Belongs to the peptidase M20A family. DapE subfamily.</text>
</comment>
<organism>
    <name type="scientific">Bradyrhizobium sp. (strain BTAi1 / ATCC BAA-1182)</name>
    <dbReference type="NCBI Taxonomy" id="288000"/>
    <lineage>
        <taxon>Bacteria</taxon>
        <taxon>Pseudomonadati</taxon>
        <taxon>Pseudomonadota</taxon>
        <taxon>Alphaproteobacteria</taxon>
        <taxon>Hyphomicrobiales</taxon>
        <taxon>Nitrobacteraceae</taxon>
        <taxon>Bradyrhizobium</taxon>
    </lineage>
</organism>
<accession>A5ESQ3</accession>
<feature type="chain" id="PRO_0000375482" description="Succinyl-diaminopimelate desuccinylase">
    <location>
        <begin position="1"/>
        <end position="384"/>
    </location>
</feature>
<feature type="active site" evidence="1">
    <location>
        <position position="73"/>
    </location>
</feature>
<feature type="active site" description="Proton acceptor" evidence="1">
    <location>
        <position position="139"/>
    </location>
</feature>
<feature type="binding site" evidence="1">
    <location>
        <position position="71"/>
    </location>
    <ligand>
        <name>Zn(2+)</name>
        <dbReference type="ChEBI" id="CHEBI:29105"/>
        <label>1</label>
    </ligand>
</feature>
<feature type="binding site" evidence="1">
    <location>
        <position position="104"/>
    </location>
    <ligand>
        <name>Zn(2+)</name>
        <dbReference type="ChEBI" id="CHEBI:29105"/>
        <label>1</label>
    </ligand>
</feature>
<feature type="binding site" evidence="1">
    <location>
        <position position="104"/>
    </location>
    <ligand>
        <name>Zn(2+)</name>
        <dbReference type="ChEBI" id="CHEBI:29105"/>
        <label>2</label>
    </ligand>
</feature>
<feature type="binding site" evidence="1">
    <location>
        <position position="140"/>
    </location>
    <ligand>
        <name>Zn(2+)</name>
        <dbReference type="ChEBI" id="CHEBI:29105"/>
        <label>2</label>
    </ligand>
</feature>
<feature type="binding site" evidence="1">
    <location>
        <position position="168"/>
    </location>
    <ligand>
        <name>Zn(2+)</name>
        <dbReference type="ChEBI" id="CHEBI:29105"/>
        <label>1</label>
    </ligand>
</feature>
<feature type="binding site" evidence="1">
    <location>
        <position position="357"/>
    </location>
    <ligand>
        <name>Zn(2+)</name>
        <dbReference type="ChEBI" id="CHEBI:29105"/>
        <label>2</label>
    </ligand>
</feature>
<sequence>MTDALTITRDLIRCPSVTPADAGALGVLEALLKQAGFTTHRITFSEAGTADIDNLYARIGTEGPHITFAGHTDVVPPGDEAAWSLPAFSGEVRDGYIYGRGAVDMKGGIACSVAAALDYLRDHDGQPKGSISFLITGDEEDVSINGTIKLLQWAAERGEKFDHCVLGEPSNQEVMGDCIKIGRRGSQSGTLIVEGRQGHVAYPHRAENPVPDISRLIVALSDEPLDHGSAQFQPSNLEFTSVDVGNTASNVIPGLARAKFNIRYNDCHTQDSLRALVEERLAKACGNRIRAHIDWLPSNSKVFLTKPGPFTDLAVAAIESVTGRKPELSTTGGTSDARFIASYCPVIEFGLVGQTMHQIDERASVADIATLTKIYRGILDRYFA</sequence>
<gene>
    <name evidence="1" type="primary">dapE</name>
    <name type="ordered locus">BBta_7333</name>
</gene>